<feature type="chain" id="PRO_0000133058" description="Uncharacterized 18.7 kDa protein in HE65-PK2 intergenic region">
    <location>
        <begin position="1"/>
        <end position="157"/>
    </location>
</feature>
<organismHost>
    <name type="scientific">Lepidoptera</name>
    <name type="common">butterflies and moths</name>
    <dbReference type="NCBI Taxonomy" id="7088"/>
</organismHost>
<dbReference type="EMBL" id="L22858">
    <property type="protein sequence ID" value="AAA66748.1"/>
    <property type="molecule type" value="Genomic_DNA"/>
</dbReference>
<dbReference type="PIR" id="G72864">
    <property type="entry name" value="G72864"/>
</dbReference>
<dbReference type="RefSeq" id="NP_054148.1">
    <property type="nucleotide sequence ID" value="NC_001623.1"/>
</dbReference>
<dbReference type="SMR" id="P41671"/>
<dbReference type="GeneID" id="1403951"/>
<dbReference type="KEGG" id="vg:1403951"/>
<dbReference type="OrthoDB" id="36931at10239"/>
<dbReference type="Proteomes" id="UP000008292">
    <property type="component" value="Segment"/>
</dbReference>
<name>Y118_NPVAC</name>
<organism>
    <name type="scientific">Autographa californica nuclear polyhedrosis virus</name>
    <name type="common">AcMNPV</name>
    <dbReference type="NCBI Taxonomy" id="46015"/>
    <lineage>
        <taxon>Viruses</taxon>
        <taxon>Viruses incertae sedis</taxon>
        <taxon>Naldaviricetes</taxon>
        <taxon>Lefavirales</taxon>
        <taxon>Baculoviridae</taxon>
        <taxon>Alphabaculovirus</taxon>
        <taxon>Alphabaculovirus aucalifornicae</taxon>
    </lineage>
</organism>
<accession>P41671</accession>
<keyword id="KW-1185">Reference proteome</keyword>
<protein>
    <recommendedName>
        <fullName>Uncharacterized 18.7 kDa protein in HE65-PK2 intergenic region</fullName>
    </recommendedName>
</protein>
<reference key="1">
    <citation type="journal article" date="1994" name="Virology">
        <title>The complete DNA sequence of Autographa californica nuclear polyhedrosis virus.</title>
        <authorList>
            <person name="Ayres M.D."/>
            <person name="Howard S.C."/>
            <person name="Kuzio J."/>
            <person name="Lopez-Ferber M."/>
            <person name="Possee R.D."/>
        </authorList>
    </citation>
    <scope>NUCLEOTIDE SEQUENCE [LARGE SCALE GENOMIC DNA]</scope>
    <source>
        <strain>C6</strain>
    </source>
</reference>
<sequence length="157" mass="18710">MHFTYWRMSEYFCTYEIFAANAIMCALMPCLAIFFIIELLCKNFNTMYNVMYVVLFAIFQLFEKGFDIAKTIADKWHIRKILLFVNNAYQHLTLYVEKYQSINYAIKIAAIYYNIYVLYYSVVFLHCLLFFNVHSKIIIKLFVVLGIDVALYSLIIK</sequence>
<proteinExistence type="predicted"/>